<organism>
    <name type="scientific">Rhodopseudomonas palustris (strain BisB5)</name>
    <dbReference type="NCBI Taxonomy" id="316057"/>
    <lineage>
        <taxon>Bacteria</taxon>
        <taxon>Pseudomonadati</taxon>
        <taxon>Pseudomonadota</taxon>
        <taxon>Alphaproteobacteria</taxon>
        <taxon>Hyphomicrobiales</taxon>
        <taxon>Nitrobacteraceae</taxon>
        <taxon>Rhodopseudomonas</taxon>
    </lineage>
</organism>
<reference key="1">
    <citation type="submission" date="2006-03" db="EMBL/GenBank/DDBJ databases">
        <title>Complete sequence of Rhodopseudomonas palustris BisB5.</title>
        <authorList>
            <consortium name="US DOE Joint Genome Institute"/>
            <person name="Copeland A."/>
            <person name="Lucas S."/>
            <person name="Lapidus A."/>
            <person name="Barry K."/>
            <person name="Detter J.C."/>
            <person name="Glavina del Rio T."/>
            <person name="Hammon N."/>
            <person name="Israni S."/>
            <person name="Dalin E."/>
            <person name="Tice H."/>
            <person name="Pitluck S."/>
            <person name="Chain P."/>
            <person name="Malfatti S."/>
            <person name="Shin M."/>
            <person name="Vergez L."/>
            <person name="Schmutz J."/>
            <person name="Larimer F."/>
            <person name="Land M."/>
            <person name="Hauser L."/>
            <person name="Pelletier D.A."/>
            <person name="Kyrpides N."/>
            <person name="Lykidis A."/>
            <person name="Oda Y."/>
            <person name="Harwood C.S."/>
            <person name="Richardson P."/>
        </authorList>
    </citation>
    <scope>NUCLEOTIDE SEQUENCE [LARGE SCALE GENOMIC DNA]</scope>
    <source>
        <strain>BisB5</strain>
    </source>
</reference>
<gene>
    <name evidence="1" type="primary">ruvA</name>
    <name type="ordered locus">RPD_4169</name>
</gene>
<dbReference type="EMBL" id="CP000283">
    <property type="protein sequence ID" value="ABE41388.1"/>
    <property type="molecule type" value="Genomic_DNA"/>
</dbReference>
<dbReference type="SMR" id="Q130V1"/>
<dbReference type="STRING" id="316057.RPD_4169"/>
<dbReference type="KEGG" id="rpd:RPD_4169"/>
<dbReference type="eggNOG" id="COG0632">
    <property type="taxonomic scope" value="Bacteria"/>
</dbReference>
<dbReference type="HOGENOM" id="CLU_087936_3_0_5"/>
<dbReference type="BioCyc" id="RPAL316057:RPD_RS20975-MONOMER"/>
<dbReference type="Proteomes" id="UP000001818">
    <property type="component" value="Chromosome"/>
</dbReference>
<dbReference type="GO" id="GO:0005737">
    <property type="term" value="C:cytoplasm"/>
    <property type="evidence" value="ECO:0007669"/>
    <property type="project" value="UniProtKB-SubCell"/>
</dbReference>
<dbReference type="GO" id="GO:0009379">
    <property type="term" value="C:Holliday junction helicase complex"/>
    <property type="evidence" value="ECO:0007669"/>
    <property type="project" value="InterPro"/>
</dbReference>
<dbReference type="GO" id="GO:0048476">
    <property type="term" value="C:Holliday junction resolvase complex"/>
    <property type="evidence" value="ECO:0007669"/>
    <property type="project" value="UniProtKB-UniRule"/>
</dbReference>
<dbReference type="GO" id="GO:0005524">
    <property type="term" value="F:ATP binding"/>
    <property type="evidence" value="ECO:0007669"/>
    <property type="project" value="InterPro"/>
</dbReference>
<dbReference type="GO" id="GO:0000400">
    <property type="term" value="F:four-way junction DNA binding"/>
    <property type="evidence" value="ECO:0007669"/>
    <property type="project" value="UniProtKB-UniRule"/>
</dbReference>
<dbReference type="GO" id="GO:0009378">
    <property type="term" value="F:four-way junction helicase activity"/>
    <property type="evidence" value="ECO:0007669"/>
    <property type="project" value="InterPro"/>
</dbReference>
<dbReference type="GO" id="GO:0006310">
    <property type="term" value="P:DNA recombination"/>
    <property type="evidence" value="ECO:0007669"/>
    <property type="project" value="UniProtKB-UniRule"/>
</dbReference>
<dbReference type="GO" id="GO:0006281">
    <property type="term" value="P:DNA repair"/>
    <property type="evidence" value="ECO:0007669"/>
    <property type="project" value="UniProtKB-UniRule"/>
</dbReference>
<dbReference type="Gene3D" id="1.10.150.20">
    <property type="entry name" value="5' to 3' exonuclease, C-terminal subdomain"/>
    <property type="match status" value="1"/>
</dbReference>
<dbReference type="Gene3D" id="1.10.8.10">
    <property type="entry name" value="DNA helicase RuvA subunit, C-terminal domain"/>
    <property type="match status" value="1"/>
</dbReference>
<dbReference type="Gene3D" id="2.40.50.140">
    <property type="entry name" value="Nucleic acid-binding proteins"/>
    <property type="match status" value="1"/>
</dbReference>
<dbReference type="HAMAP" id="MF_00031">
    <property type="entry name" value="DNA_HJ_migration_RuvA"/>
    <property type="match status" value="1"/>
</dbReference>
<dbReference type="InterPro" id="IPR013849">
    <property type="entry name" value="DNA_helicase_Holl-junc_RuvA_I"/>
</dbReference>
<dbReference type="InterPro" id="IPR012340">
    <property type="entry name" value="NA-bd_OB-fold"/>
</dbReference>
<dbReference type="InterPro" id="IPR000085">
    <property type="entry name" value="RuvA"/>
</dbReference>
<dbReference type="InterPro" id="IPR010994">
    <property type="entry name" value="RuvA_2-like"/>
</dbReference>
<dbReference type="InterPro" id="IPR011114">
    <property type="entry name" value="RuvA_C"/>
</dbReference>
<dbReference type="InterPro" id="IPR036267">
    <property type="entry name" value="RuvA_C_sf"/>
</dbReference>
<dbReference type="NCBIfam" id="TIGR00084">
    <property type="entry name" value="ruvA"/>
    <property type="match status" value="1"/>
</dbReference>
<dbReference type="Pfam" id="PF14520">
    <property type="entry name" value="HHH_5"/>
    <property type="match status" value="1"/>
</dbReference>
<dbReference type="Pfam" id="PF07499">
    <property type="entry name" value="RuvA_C"/>
    <property type="match status" value="1"/>
</dbReference>
<dbReference type="Pfam" id="PF01330">
    <property type="entry name" value="RuvA_N"/>
    <property type="match status" value="1"/>
</dbReference>
<dbReference type="SUPFAM" id="SSF46929">
    <property type="entry name" value="DNA helicase RuvA subunit, C-terminal domain"/>
    <property type="match status" value="1"/>
</dbReference>
<dbReference type="SUPFAM" id="SSF50249">
    <property type="entry name" value="Nucleic acid-binding proteins"/>
    <property type="match status" value="1"/>
</dbReference>
<dbReference type="SUPFAM" id="SSF47781">
    <property type="entry name" value="RuvA domain 2-like"/>
    <property type="match status" value="1"/>
</dbReference>
<name>RUVA_RHOPS</name>
<protein>
    <recommendedName>
        <fullName evidence="1">Holliday junction branch migration complex subunit RuvA</fullName>
    </recommendedName>
</protein>
<feature type="chain" id="PRO_1000002530" description="Holliday junction branch migration complex subunit RuvA">
    <location>
        <begin position="1"/>
        <end position="205"/>
    </location>
</feature>
<feature type="region of interest" description="Domain I" evidence="1">
    <location>
        <begin position="1"/>
        <end position="64"/>
    </location>
</feature>
<feature type="region of interest" description="Domain II" evidence="1">
    <location>
        <begin position="65"/>
        <end position="143"/>
    </location>
</feature>
<feature type="region of interest" description="Flexible linker" evidence="1">
    <location>
        <begin position="144"/>
        <end position="154"/>
    </location>
</feature>
<feature type="region of interest" description="Domain III" evidence="1">
    <location>
        <begin position="154"/>
        <end position="205"/>
    </location>
</feature>
<evidence type="ECO:0000255" key="1">
    <source>
        <dbReference type="HAMAP-Rule" id="MF_00031"/>
    </source>
</evidence>
<sequence>MIGKLKGLIDSYGEDYVILDVHGVGYQVHCSSRTLQALPSPGEAATLSIETYVREDQIKLFGFRTDHEREWFRLLQTVQSVGAKVALAVLSTLPPNDLANAIALRDKAAVARTPGVGPKVAERIVSELKDKVPALSNVDPAVVQLSGALDDNRAPRPVTDAISALVNLGYGQPQAAAAIAAAARAAGDDAATAQLIKLGLKELSK</sequence>
<accession>Q130V1</accession>
<keyword id="KW-0963">Cytoplasm</keyword>
<keyword id="KW-0227">DNA damage</keyword>
<keyword id="KW-0233">DNA recombination</keyword>
<keyword id="KW-0234">DNA repair</keyword>
<keyword id="KW-0238">DNA-binding</keyword>
<proteinExistence type="inferred from homology"/>
<comment type="function">
    <text evidence="1">The RuvA-RuvB-RuvC complex processes Holliday junction (HJ) DNA during genetic recombination and DNA repair, while the RuvA-RuvB complex plays an important role in the rescue of blocked DNA replication forks via replication fork reversal (RFR). RuvA specifically binds to HJ cruciform DNA, conferring on it an open structure. The RuvB hexamer acts as an ATP-dependent pump, pulling dsDNA into and through the RuvAB complex. HJ branch migration allows RuvC to scan DNA until it finds its consensus sequence, where it cleaves and resolves the cruciform DNA.</text>
</comment>
<comment type="subunit">
    <text evidence="1">Homotetramer. Forms an RuvA(8)-RuvB(12)-Holliday junction (HJ) complex. HJ DNA is sandwiched between 2 RuvA tetramers; dsDNA enters through RuvA and exits via RuvB. An RuvB hexamer assembles on each DNA strand where it exits the tetramer. Each RuvB hexamer is contacted by two RuvA subunits (via domain III) on 2 adjacent RuvB subunits; this complex drives branch migration. In the full resolvosome a probable DNA-RuvA(4)-RuvB(12)-RuvC(2) complex forms which resolves the HJ.</text>
</comment>
<comment type="subcellular location">
    <subcellularLocation>
        <location evidence="1">Cytoplasm</location>
    </subcellularLocation>
</comment>
<comment type="domain">
    <text evidence="1">Has three domains with a flexible linker between the domains II and III and assumes an 'L' shape. Domain III is highly mobile and contacts RuvB.</text>
</comment>
<comment type="similarity">
    <text evidence="1">Belongs to the RuvA family.</text>
</comment>